<sequence>MAAKIKKGDTVVVLTGRDAGRSGEVIQVLPKDGKAFVRGVNLVKKHQKQTQNAEGGIISKEAAIQLSNLAFQDVNGKPTRVGFRILEDGRKVRFAKTTGDQIDG</sequence>
<name>RL24_METPB</name>
<dbReference type="EMBL" id="CP001029">
    <property type="protein sequence ID" value="ACB80315.1"/>
    <property type="molecule type" value="Genomic_DNA"/>
</dbReference>
<dbReference type="RefSeq" id="WP_012454050.1">
    <property type="nucleotide sequence ID" value="NC_010725.1"/>
</dbReference>
<dbReference type="SMR" id="B1Z782"/>
<dbReference type="STRING" id="441620.Mpop_2153"/>
<dbReference type="KEGG" id="mpo:Mpop_2153"/>
<dbReference type="eggNOG" id="COG0198">
    <property type="taxonomic scope" value="Bacteria"/>
</dbReference>
<dbReference type="HOGENOM" id="CLU_093315_2_2_5"/>
<dbReference type="OrthoDB" id="9807419at2"/>
<dbReference type="Proteomes" id="UP000007136">
    <property type="component" value="Chromosome"/>
</dbReference>
<dbReference type="GO" id="GO:1990904">
    <property type="term" value="C:ribonucleoprotein complex"/>
    <property type="evidence" value="ECO:0007669"/>
    <property type="project" value="UniProtKB-KW"/>
</dbReference>
<dbReference type="GO" id="GO:0005840">
    <property type="term" value="C:ribosome"/>
    <property type="evidence" value="ECO:0007669"/>
    <property type="project" value="UniProtKB-KW"/>
</dbReference>
<dbReference type="GO" id="GO:0019843">
    <property type="term" value="F:rRNA binding"/>
    <property type="evidence" value="ECO:0007669"/>
    <property type="project" value="UniProtKB-UniRule"/>
</dbReference>
<dbReference type="GO" id="GO:0003735">
    <property type="term" value="F:structural constituent of ribosome"/>
    <property type="evidence" value="ECO:0007669"/>
    <property type="project" value="InterPro"/>
</dbReference>
<dbReference type="GO" id="GO:0006412">
    <property type="term" value="P:translation"/>
    <property type="evidence" value="ECO:0007669"/>
    <property type="project" value="UniProtKB-UniRule"/>
</dbReference>
<dbReference type="CDD" id="cd06089">
    <property type="entry name" value="KOW_RPL26"/>
    <property type="match status" value="1"/>
</dbReference>
<dbReference type="FunFam" id="2.30.30.30:FF:000004">
    <property type="entry name" value="50S ribosomal protein L24"/>
    <property type="match status" value="1"/>
</dbReference>
<dbReference type="Gene3D" id="2.30.30.30">
    <property type="match status" value="1"/>
</dbReference>
<dbReference type="HAMAP" id="MF_01326_B">
    <property type="entry name" value="Ribosomal_uL24_B"/>
    <property type="match status" value="1"/>
</dbReference>
<dbReference type="InterPro" id="IPR005824">
    <property type="entry name" value="KOW"/>
</dbReference>
<dbReference type="InterPro" id="IPR014722">
    <property type="entry name" value="Rib_uL2_dom2"/>
</dbReference>
<dbReference type="InterPro" id="IPR003256">
    <property type="entry name" value="Ribosomal_uL24"/>
</dbReference>
<dbReference type="InterPro" id="IPR005825">
    <property type="entry name" value="Ribosomal_uL24_CS"/>
</dbReference>
<dbReference type="InterPro" id="IPR041988">
    <property type="entry name" value="Ribosomal_uL24_KOW"/>
</dbReference>
<dbReference type="InterPro" id="IPR008991">
    <property type="entry name" value="Translation_prot_SH3-like_sf"/>
</dbReference>
<dbReference type="NCBIfam" id="TIGR01079">
    <property type="entry name" value="rplX_bact"/>
    <property type="match status" value="1"/>
</dbReference>
<dbReference type="PANTHER" id="PTHR12903">
    <property type="entry name" value="MITOCHONDRIAL RIBOSOMAL PROTEIN L24"/>
    <property type="match status" value="1"/>
</dbReference>
<dbReference type="Pfam" id="PF00467">
    <property type="entry name" value="KOW"/>
    <property type="match status" value="1"/>
</dbReference>
<dbReference type="Pfam" id="PF17136">
    <property type="entry name" value="ribosomal_L24"/>
    <property type="match status" value="1"/>
</dbReference>
<dbReference type="SMART" id="SM00739">
    <property type="entry name" value="KOW"/>
    <property type="match status" value="1"/>
</dbReference>
<dbReference type="SUPFAM" id="SSF50104">
    <property type="entry name" value="Translation proteins SH3-like domain"/>
    <property type="match status" value="1"/>
</dbReference>
<dbReference type="PROSITE" id="PS01108">
    <property type="entry name" value="RIBOSOMAL_L24"/>
    <property type="match status" value="1"/>
</dbReference>
<comment type="function">
    <text evidence="1">One of two assembly initiator proteins, it binds directly to the 5'-end of the 23S rRNA, where it nucleates assembly of the 50S subunit.</text>
</comment>
<comment type="function">
    <text evidence="1">One of the proteins that surrounds the polypeptide exit tunnel on the outside of the subunit.</text>
</comment>
<comment type="subunit">
    <text evidence="1">Part of the 50S ribosomal subunit.</text>
</comment>
<comment type="similarity">
    <text evidence="1">Belongs to the universal ribosomal protein uL24 family.</text>
</comment>
<keyword id="KW-0687">Ribonucleoprotein</keyword>
<keyword id="KW-0689">Ribosomal protein</keyword>
<keyword id="KW-0694">RNA-binding</keyword>
<keyword id="KW-0699">rRNA-binding</keyword>
<evidence type="ECO:0000255" key="1">
    <source>
        <dbReference type="HAMAP-Rule" id="MF_01326"/>
    </source>
</evidence>
<evidence type="ECO:0000305" key="2"/>
<protein>
    <recommendedName>
        <fullName evidence="1">Large ribosomal subunit protein uL24</fullName>
    </recommendedName>
    <alternativeName>
        <fullName evidence="2">50S ribosomal protein L24</fullName>
    </alternativeName>
</protein>
<feature type="chain" id="PRO_1000142014" description="Large ribosomal subunit protein uL24">
    <location>
        <begin position="1"/>
        <end position="104"/>
    </location>
</feature>
<gene>
    <name evidence="1" type="primary">rplX</name>
    <name type="ordered locus">Mpop_2153</name>
</gene>
<organism>
    <name type="scientific">Methylorubrum populi (strain ATCC BAA-705 / NCIMB 13946 / BJ001)</name>
    <name type="common">Methylobacterium populi</name>
    <dbReference type="NCBI Taxonomy" id="441620"/>
    <lineage>
        <taxon>Bacteria</taxon>
        <taxon>Pseudomonadati</taxon>
        <taxon>Pseudomonadota</taxon>
        <taxon>Alphaproteobacteria</taxon>
        <taxon>Hyphomicrobiales</taxon>
        <taxon>Methylobacteriaceae</taxon>
        <taxon>Methylorubrum</taxon>
    </lineage>
</organism>
<accession>B1Z782</accession>
<proteinExistence type="inferred from homology"/>
<reference key="1">
    <citation type="submission" date="2008-04" db="EMBL/GenBank/DDBJ databases">
        <title>Complete sequence of chromosome of Methylobacterium populi BJ001.</title>
        <authorList>
            <consortium name="US DOE Joint Genome Institute"/>
            <person name="Copeland A."/>
            <person name="Lucas S."/>
            <person name="Lapidus A."/>
            <person name="Glavina del Rio T."/>
            <person name="Dalin E."/>
            <person name="Tice H."/>
            <person name="Bruce D."/>
            <person name="Goodwin L."/>
            <person name="Pitluck S."/>
            <person name="Chertkov O."/>
            <person name="Brettin T."/>
            <person name="Detter J.C."/>
            <person name="Han C."/>
            <person name="Kuske C.R."/>
            <person name="Schmutz J."/>
            <person name="Larimer F."/>
            <person name="Land M."/>
            <person name="Hauser L."/>
            <person name="Kyrpides N."/>
            <person name="Mikhailova N."/>
            <person name="Marx C."/>
            <person name="Richardson P."/>
        </authorList>
    </citation>
    <scope>NUCLEOTIDE SEQUENCE [LARGE SCALE GENOMIC DNA]</scope>
    <source>
        <strain>ATCC BAA-705 / NCIMB 13946 / BJ001</strain>
    </source>
</reference>